<gene>
    <name evidence="1" type="primary">rpmC</name>
    <name type="ordered locus">EAT1b_1625</name>
</gene>
<proteinExistence type="inferred from homology"/>
<protein>
    <recommendedName>
        <fullName evidence="1">Large ribosomal subunit protein uL29</fullName>
    </recommendedName>
    <alternativeName>
        <fullName evidence="2">50S ribosomal protein L29</fullName>
    </alternativeName>
</protein>
<reference key="1">
    <citation type="journal article" date="2011" name="J. Bacteriol.">
        <title>Complete genome sequence of the Thermophilic Bacterium Exiguobacterium sp. AT1b.</title>
        <authorList>
            <person name="Vishnivetskaya T.A."/>
            <person name="Lucas S."/>
            <person name="Copeland A."/>
            <person name="Lapidus A."/>
            <person name="Glavina del Rio T."/>
            <person name="Dalin E."/>
            <person name="Tice H."/>
            <person name="Bruce D.C."/>
            <person name="Goodwin L.A."/>
            <person name="Pitluck S."/>
            <person name="Saunders E."/>
            <person name="Brettin T."/>
            <person name="Detter C."/>
            <person name="Han C."/>
            <person name="Larimer F."/>
            <person name="Land M.L."/>
            <person name="Hauser L.J."/>
            <person name="Kyrpides N.C."/>
            <person name="Ovchinnikova G."/>
            <person name="Kathariou S."/>
            <person name="Ramaley R.F."/>
            <person name="Rodrigues D.F."/>
            <person name="Hendrix C."/>
            <person name="Richardson P."/>
            <person name="Tiedje J.M."/>
        </authorList>
    </citation>
    <scope>NUCLEOTIDE SEQUENCE [LARGE SCALE GENOMIC DNA]</scope>
    <source>
        <strain>ATCC BAA-1283 / AT1b</strain>
    </source>
</reference>
<name>RL29_EXISA</name>
<evidence type="ECO:0000255" key="1">
    <source>
        <dbReference type="HAMAP-Rule" id="MF_00374"/>
    </source>
</evidence>
<evidence type="ECO:0000305" key="2"/>
<dbReference type="EMBL" id="CP001615">
    <property type="protein sequence ID" value="ACQ70551.1"/>
    <property type="molecule type" value="Genomic_DNA"/>
</dbReference>
<dbReference type="RefSeq" id="WP_012727669.1">
    <property type="nucleotide sequence ID" value="NZ_MOEL01000001.1"/>
</dbReference>
<dbReference type="SMR" id="C4KZN8"/>
<dbReference type="STRING" id="360911.EAT1b_1625"/>
<dbReference type="GeneID" id="94370751"/>
<dbReference type="KEGG" id="eat:EAT1b_1625"/>
<dbReference type="eggNOG" id="COG0255">
    <property type="taxonomic scope" value="Bacteria"/>
</dbReference>
<dbReference type="HOGENOM" id="CLU_158491_5_2_9"/>
<dbReference type="OrthoDB" id="9815192at2"/>
<dbReference type="Proteomes" id="UP000000716">
    <property type="component" value="Chromosome"/>
</dbReference>
<dbReference type="GO" id="GO:0022625">
    <property type="term" value="C:cytosolic large ribosomal subunit"/>
    <property type="evidence" value="ECO:0007669"/>
    <property type="project" value="TreeGrafter"/>
</dbReference>
<dbReference type="GO" id="GO:0003735">
    <property type="term" value="F:structural constituent of ribosome"/>
    <property type="evidence" value="ECO:0007669"/>
    <property type="project" value="InterPro"/>
</dbReference>
<dbReference type="GO" id="GO:0006412">
    <property type="term" value="P:translation"/>
    <property type="evidence" value="ECO:0007669"/>
    <property type="project" value="UniProtKB-UniRule"/>
</dbReference>
<dbReference type="CDD" id="cd00427">
    <property type="entry name" value="Ribosomal_L29_HIP"/>
    <property type="match status" value="1"/>
</dbReference>
<dbReference type="FunFam" id="1.10.287.310:FF:000001">
    <property type="entry name" value="50S ribosomal protein L29"/>
    <property type="match status" value="1"/>
</dbReference>
<dbReference type="Gene3D" id="1.10.287.310">
    <property type="match status" value="1"/>
</dbReference>
<dbReference type="HAMAP" id="MF_00374">
    <property type="entry name" value="Ribosomal_uL29"/>
    <property type="match status" value="1"/>
</dbReference>
<dbReference type="InterPro" id="IPR050063">
    <property type="entry name" value="Ribosomal_protein_uL29"/>
</dbReference>
<dbReference type="InterPro" id="IPR001854">
    <property type="entry name" value="Ribosomal_uL29"/>
</dbReference>
<dbReference type="InterPro" id="IPR018254">
    <property type="entry name" value="Ribosomal_uL29_CS"/>
</dbReference>
<dbReference type="InterPro" id="IPR036049">
    <property type="entry name" value="Ribosomal_uL29_sf"/>
</dbReference>
<dbReference type="NCBIfam" id="TIGR00012">
    <property type="entry name" value="L29"/>
    <property type="match status" value="1"/>
</dbReference>
<dbReference type="PANTHER" id="PTHR10916">
    <property type="entry name" value="60S RIBOSOMAL PROTEIN L35/50S RIBOSOMAL PROTEIN L29"/>
    <property type="match status" value="1"/>
</dbReference>
<dbReference type="PANTHER" id="PTHR10916:SF0">
    <property type="entry name" value="LARGE RIBOSOMAL SUBUNIT PROTEIN UL29C"/>
    <property type="match status" value="1"/>
</dbReference>
<dbReference type="Pfam" id="PF00831">
    <property type="entry name" value="Ribosomal_L29"/>
    <property type="match status" value="1"/>
</dbReference>
<dbReference type="SUPFAM" id="SSF46561">
    <property type="entry name" value="Ribosomal protein L29 (L29p)"/>
    <property type="match status" value="1"/>
</dbReference>
<dbReference type="PROSITE" id="PS00579">
    <property type="entry name" value="RIBOSOMAL_L29"/>
    <property type="match status" value="1"/>
</dbReference>
<sequence>MKATDLRQSTTEELNGKVGEWKEELFNLRFQLATGQLENPARIREVRKSIARAKTILRERELGINNG</sequence>
<organism>
    <name type="scientific">Exiguobacterium sp. (strain ATCC BAA-1283 / AT1b)</name>
    <dbReference type="NCBI Taxonomy" id="360911"/>
    <lineage>
        <taxon>Bacteria</taxon>
        <taxon>Bacillati</taxon>
        <taxon>Bacillota</taxon>
        <taxon>Bacilli</taxon>
        <taxon>Bacillales</taxon>
        <taxon>Bacillales Family XII. Incertae Sedis</taxon>
        <taxon>Exiguobacterium</taxon>
    </lineage>
</organism>
<comment type="similarity">
    <text evidence="1">Belongs to the universal ribosomal protein uL29 family.</text>
</comment>
<feature type="chain" id="PRO_1000205626" description="Large ribosomal subunit protein uL29">
    <location>
        <begin position="1"/>
        <end position="67"/>
    </location>
</feature>
<keyword id="KW-0687">Ribonucleoprotein</keyword>
<keyword id="KW-0689">Ribosomal protein</keyword>
<accession>C4KZN8</accession>